<keyword id="KW-0472">Membrane</keyword>
<keyword id="KW-1185">Reference proteome</keyword>
<keyword id="KW-0732">Signal</keyword>
<keyword id="KW-0812">Transmembrane</keyword>
<keyword id="KW-1133">Transmembrane helix</keyword>
<name>FH2_ORYSI</name>
<gene>
    <name type="primary">FH2</name>
    <name type="ORF">OsI_015644</name>
</gene>
<protein>
    <recommendedName>
        <fullName>Formin-like protein 2</fullName>
    </recommendedName>
    <alternativeName>
        <fullName>OsFH2</fullName>
    </alternativeName>
</protein>
<reference key="1">
    <citation type="journal article" date="2005" name="PLoS Biol.">
        <title>The genomes of Oryza sativa: a history of duplications.</title>
        <authorList>
            <person name="Yu J."/>
            <person name="Wang J."/>
            <person name="Lin W."/>
            <person name="Li S."/>
            <person name="Li H."/>
            <person name="Zhou J."/>
            <person name="Ni P."/>
            <person name="Dong W."/>
            <person name="Hu S."/>
            <person name="Zeng C."/>
            <person name="Zhang J."/>
            <person name="Zhang Y."/>
            <person name="Li R."/>
            <person name="Xu Z."/>
            <person name="Li S."/>
            <person name="Li X."/>
            <person name="Zheng H."/>
            <person name="Cong L."/>
            <person name="Lin L."/>
            <person name="Yin J."/>
            <person name="Geng J."/>
            <person name="Li G."/>
            <person name="Shi J."/>
            <person name="Liu J."/>
            <person name="Lv H."/>
            <person name="Li J."/>
            <person name="Wang J."/>
            <person name="Deng Y."/>
            <person name="Ran L."/>
            <person name="Shi X."/>
            <person name="Wang X."/>
            <person name="Wu Q."/>
            <person name="Li C."/>
            <person name="Ren X."/>
            <person name="Wang J."/>
            <person name="Wang X."/>
            <person name="Li D."/>
            <person name="Liu D."/>
            <person name="Zhang X."/>
            <person name="Ji Z."/>
            <person name="Zhao W."/>
            <person name="Sun Y."/>
            <person name="Zhang Z."/>
            <person name="Bao J."/>
            <person name="Han Y."/>
            <person name="Dong L."/>
            <person name="Ji J."/>
            <person name="Chen P."/>
            <person name="Wu S."/>
            <person name="Liu J."/>
            <person name="Xiao Y."/>
            <person name="Bu D."/>
            <person name="Tan J."/>
            <person name="Yang L."/>
            <person name="Ye C."/>
            <person name="Zhang J."/>
            <person name="Xu J."/>
            <person name="Zhou Y."/>
            <person name="Yu Y."/>
            <person name="Zhang B."/>
            <person name="Zhuang S."/>
            <person name="Wei H."/>
            <person name="Liu B."/>
            <person name="Lei M."/>
            <person name="Yu H."/>
            <person name="Li Y."/>
            <person name="Xu H."/>
            <person name="Wei S."/>
            <person name="He X."/>
            <person name="Fang L."/>
            <person name="Zhang Z."/>
            <person name="Zhang Y."/>
            <person name="Huang X."/>
            <person name="Su Z."/>
            <person name="Tong W."/>
            <person name="Li J."/>
            <person name="Tong Z."/>
            <person name="Li S."/>
            <person name="Ye J."/>
            <person name="Wang L."/>
            <person name="Fang L."/>
            <person name="Lei T."/>
            <person name="Chen C.-S."/>
            <person name="Chen H.-C."/>
            <person name="Xu Z."/>
            <person name="Li H."/>
            <person name="Huang H."/>
            <person name="Zhang F."/>
            <person name="Xu H."/>
            <person name="Li N."/>
            <person name="Zhao C."/>
            <person name="Li S."/>
            <person name="Dong L."/>
            <person name="Huang Y."/>
            <person name="Li L."/>
            <person name="Xi Y."/>
            <person name="Qi Q."/>
            <person name="Li W."/>
            <person name="Zhang B."/>
            <person name="Hu W."/>
            <person name="Zhang Y."/>
            <person name="Tian X."/>
            <person name="Jiao Y."/>
            <person name="Liang X."/>
            <person name="Jin J."/>
            <person name="Gao L."/>
            <person name="Zheng W."/>
            <person name="Hao B."/>
            <person name="Liu S.-M."/>
            <person name="Wang W."/>
            <person name="Yuan L."/>
            <person name="Cao M."/>
            <person name="McDermott J."/>
            <person name="Samudrala R."/>
            <person name="Wang J."/>
            <person name="Wong G.K.-S."/>
            <person name="Yang H."/>
        </authorList>
    </citation>
    <scope>NUCLEOTIDE SEQUENCE [LARGE SCALE GENOMIC DNA]</scope>
    <source>
        <strain>cv. 93-11</strain>
    </source>
</reference>
<reference key="2">
    <citation type="journal article" date="2004" name="BMC Genomics">
        <title>Formin homology 2 domains occur in multiple contexts in angiosperms.</title>
        <authorList>
            <person name="Cvrckova F."/>
            <person name="Novotny M."/>
            <person name="Pickova D."/>
            <person name="Zarsky V."/>
        </authorList>
    </citation>
    <scope>GENE FAMILY</scope>
    <scope>NOMENCLATURE</scope>
</reference>
<evidence type="ECO:0000255" key="1"/>
<evidence type="ECO:0000255" key="2">
    <source>
        <dbReference type="PROSITE-ProRule" id="PRU00774"/>
    </source>
</evidence>
<evidence type="ECO:0000256" key="3">
    <source>
        <dbReference type="SAM" id="MobiDB-lite"/>
    </source>
</evidence>
<evidence type="ECO:0000305" key="4"/>
<proteinExistence type="inferred from homology"/>
<organism>
    <name type="scientific">Oryza sativa subsp. indica</name>
    <name type="common">Rice</name>
    <dbReference type="NCBI Taxonomy" id="39946"/>
    <lineage>
        <taxon>Eukaryota</taxon>
        <taxon>Viridiplantae</taxon>
        <taxon>Streptophyta</taxon>
        <taxon>Embryophyta</taxon>
        <taxon>Tracheophyta</taxon>
        <taxon>Spermatophyta</taxon>
        <taxon>Magnoliopsida</taxon>
        <taxon>Liliopsida</taxon>
        <taxon>Poales</taxon>
        <taxon>Poaceae</taxon>
        <taxon>BOP clade</taxon>
        <taxon>Oryzoideae</taxon>
        <taxon>Oryzeae</taxon>
        <taxon>Oryzinae</taxon>
        <taxon>Oryza</taxon>
        <taxon>Oryza sativa</taxon>
    </lineage>
</organism>
<sequence length="833" mass="88899">MSSSARGITLLCLLLIVSSTVLHFSIGGGSNGEKRRDDGDGDGDDEKVRLLLGANALGERDRRHGHGHGGGVSSAPAPAPAPARAHLPPPLLHKNARLPDPVPGRVGLGHRRGNATAAHRRRSEREGKKSTPLVVVAAGAALSGAAAVLLVVLVVFLACRRFQRRAMPGADQSGTNKVSFDPGPDVFYLDAVKPYVEADHGGGGGVVKTAPELAGPKEEPRCEEEDSGVALSDDGADSVHSSCCFHSSHFSYSELRDTKPGSNGVSPSPSGRSRRRSSAPVTPSEKNKAASPYSPQCPRTPSNRERSSRAHSPSSSVSDLTSVSTSVVKDHEVRRAVHSLMFPEAQSGGAGHVKEDEAESGNMRPPPPPPPPPPPPPPAVTQQQDVKTSCGPAVPPPPPPTPPPPPPLLAPKQQSSGGPILPPAPAPPPLFRPWAPAVGKNGAPLPKLKPLHWDKVRAAPNRRMVWDRIRSSSFELDEKMIESLFGYNARCSTKHEEVQSRSPSLGHHVLDTKRLQNFTILMKAVSATAEQIFAALLHGNGLSAQQLEALIKMAPAKDEADKLSAYDGDVDGLVPAERLLKVVLTIPCAFARVEAMLYRETFADEVGHIRKSFEMLEEACRELMSSKLFLKLLEAVLKTGNRMNVGTARGGAMAFKLDALLKLADVKGTDGKTTLLHFVVQEMTRSRAAEAADIAAGLGAELTNVRKTATVDLDVLTTSVSGLSHGLSRIKELVGSDLSGDERNQCFVAFMAPFVAHAGEVIRELEDGERRVLAHVREITEYYHGDVGKDEASPLRIFVIVRDFLGMLERVCKEVRGAKNCHGGNPALNLNNV</sequence>
<feature type="signal peptide" evidence="1">
    <location>
        <begin position="1"/>
        <end position="19"/>
    </location>
</feature>
<feature type="chain" id="PRO_0000318995" description="Formin-like protein 2">
    <location>
        <begin position="20"/>
        <end position="833"/>
    </location>
</feature>
<feature type="transmembrane region" description="Helical" evidence="1">
    <location>
        <begin position="136"/>
        <end position="156"/>
    </location>
</feature>
<feature type="domain" description="FH2" evidence="2">
    <location>
        <begin position="438"/>
        <end position="833"/>
    </location>
</feature>
<feature type="region of interest" description="Disordered" evidence="3">
    <location>
        <begin position="26"/>
        <end position="130"/>
    </location>
</feature>
<feature type="region of interest" description="Disordered" evidence="3">
    <location>
        <begin position="199"/>
        <end position="234"/>
    </location>
</feature>
<feature type="region of interest" description="Disordered" evidence="3">
    <location>
        <begin position="254"/>
        <end position="326"/>
    </location>
</feature>
<feature type="region of interest" description="Disordered" evidence="3">
    <location>
        <begin position="340"/>
        <end position="435"/>
    </location>
</feature>
<feature type="compositionally biased region" description="Pro residues" evidence="3">
    <location>
        <begin position="77"/>
        <end position="91"/>
    </location>
</feature>
<feature type="compositionally biased region" description="Basic residues" evidence="3">
    <location>
        <begin position="108"/>
        <end position="122"/>
    </location>
</feature>
<feature type="compositionally biased region" description="Low complexity" evidence="3">
    <location>
        <begin position="260"/>
        <end position="271"/>
    </location>
</feature>
<feature type="compositionally biased region" description="Low complexity" evidence="3">
    <location>
        <begin position="310"/>
        <end position="326"/>
    </location>
</feature>
<feature type="compositionally biased region" description="Pro residues" evidence="3">
    <location>
        <begin position="364"/>
        <end position="379"/>
    </location>
</feature>
<feature type="compositionally biased region" description="Pro residues" evidence="3">
    <location>
        <begin position="393"/>
        <end position="409"/>
    </location>
</feature>
<feature type="compositionally biased region" description="Pro residues" evidence="3">
    <location>
        <begin position="420"/>
        <end position="431"/>
    </location>
</feature>
<dbReference type="EMBL" id="CM000129">
    <property type="protein sequence ID" value="EAY94411.1"/>
    <property type="molecule type" value="Genomic_DNA"/>
</dbReference>
<dbReference type="SMR" id="A2XUA1"/>
<dbReference type="STRING" id="39946.A2XUA1"/>
<dbReference type="EnsemblPlants" id="BGIOSGA014956-TA">
    <property type="protein sequence ID" value="BGIOSGA014956-PA"/>
    <property type="gene ID" value="BGIOSGA014956"/>
</dbReference>
<dbReference type="EnsemblPlants" id="OsIR64_04g0015250.01">
    <property type="protein sequence ID" value="OsIR64_04g0015250.01"/>
    <property type="gene ID" value="OsIR64_04g0015250"/>
</dbReference>
<dbReference type="EnsemblPlants" id="OsKYG_04g0015690.01">
    <property type="protein sequence ID" value="OsKYG_04g0015690.01"/>
    <property type="gene ID" value="OsKYG_04g0015690"/>
</dbReference>
<dbReference type="EnsemblPlants" id="OsLima_04g0015800.01">
    <property type="protein sequence ID" value="OsLima_04g0015800.01"/>
    <property type="gene ID" value="OsLima_04g0015800"/>
</dbReference>
<dbReference type="EnsemblPlants" id="OsLiXu_04g0016180.01">
    <property type="protein sequence ID" value="OsLiXu_04g0016180.01"/>
    <property type="gene ID" value="OsLiXu_04g0016180"/>
</dbReference>
<dbReference type="EnsemblPlants" id="OsMH63_04G016600_01">
    <property type="protein sequence ID" value="OsMH63_04G016600_01"/>
    <property type="gene ID" value="OsMH63_04G016600"/>
</dbReference>
<dbReference type="EnsemblPlants" id="OsPr106_04g0016450.01">
    <property type="protein sequence ID" value="OsPr106_04g0016450.01"/>
    <property type="gene ID" value="OsPr106_04g0016450"/>
</dbReference>
<dbReference type="EnsemblPlants" id="OsZS97_04G016610_01">
    <property type="protein sequence ID" value="OsZS97_04G016610_01"/>
    <property type="gene ID" value="OsZS97_04G016610"/>
</dbReference>
<dbReference type="Gramene" id="BGIOSGA014956-TA">
    <property type="protein sequence ID" value="BGIOSGA014956-PA"/>
    <property type="gene ID" value="BGIOSGA014956"/>
</dbReference>
<dbReference type="Gramene" id="OsIR64_04g0015250.01">
    <property type="protein sequence ID" value="OsIR64_04g0015250.01"/>
    <property type="gene ID" value="OsIR64_04g0015250"/>
</dbReference>
<dbReference type="Gramene" id="OsKYG_04g0015690.01">
    <property type="protein sequence ID" value="OsKYG_04g0015690.01"/>
    <property type="gene ID" value="OsKYG_04g0015690"/>
</dbReference>
<dbReference type="Gramene" id="OsLima_04g0015800.01">
    <property type="protein sequence ID" value="OsLima_04g0015800.01"/>
    <property type="gene ID" value="OsLima_04g0015800"/>
</dbReference>
<dbReference type="Gramene" id="OsLiXu_04g0016180.01">
    <property type="protein sequence ID" value="OsLiXu_04g0016180.01"/>
    <property type="gene ID" value="OsLiXu_04g0016180"/>
</dbReference>
<dbReference type="Gramene" id="OsMH63_04G016600_01">
    <property type="protein sequence ID" value="OsMH63_04G016600_01"/>
    <property type="gene ID" value="OsMH63_04G016600"/>
</dbReference>
<dbReference type="Gramene" id="OsPr106_04g0016450.01">
    <property type="protein sequence ID" value="OsPr106_04g0016450.01"/>
    <property type="gene ID" value="OsPr106_04g0016450"/>
</dbReference>
<dbReference type="Gramene" id="OsZS97_04G016610_01">
    <property type="protein sequence ID" value="OsZS97_04G016610_01"/>
    <property type="gene ID" value="OsZS97_04G016610"/>
</dbReference>
<dbReference type="HOGENOM" id="CLU_007699_2_1_1"/>
<dbReference type="OMA" id="LKFQSGG"/>
<dbReference type="Proteomes" id="UP000007015">
    <property type="component" value="Chromosome 4"/>
</dbReference>
<dbReference type="GO" id="GO:0016020">
    <property type="term" value="C:membrane"/>
    <property type="evidence" value="ECO:0007669"/>
    <property type="project" value="UniProtKB-SubCell"/>
</dbReference>
<dbReference type="GO" id="GO:0051015">
    <property type="term" value="F:actin filament binding"/>
    <property type="evidence" value="ECO:0007669"/>
    <property type="project" value="InterPro"/>
</dbReference>
<dbReference type="GO" id="GO:0045010">
    <property type="term" value="P:actin nucleation"/>
    <property type="evidence" value="ECO:0007669"/>
    <property type="project" value="InterPro"/>
</dbReference>
<dbReference type="Gene3D" id="1.20.58.2220">
    <property type="entry name" value="Formin, FH2 domain"/>
    <property type="match status" value="1"/>
</dbReference>
<dbReference type="InterPro" id="IPR015425">
    <property type="entry name" value="FH2_Formin"/>
</dbReference>
<dbReference type="InterPro" id="IPR042201">
    <property type="entry name" value="FH2_Formin_sf"/>
</dbReference>
<dbReference type="InterPro" id="IPR027643">
    <property type="entry name" value="Formin-like_plant"/>
</dbReference>
<dbReference type="PANTHER" id="PTHR23213:SF358">
    <property type="entry name" value="FORMIN-LIKE PROTEIN 2"/>
    <property type="match status" value="1"/>
</dbReference>
<dbReference type="PANTHER" id="PTHR23213">
    <property type="entry name" value="FORMIN-RELATED"/>
    <property type="match status" value="1"/>
</dbReference>
<dbReference type="Pfam" id="PF02181">
    <property type="entry name" value="FH2"/>
    <property type="match status" value="1"/>
</dbReference>
<dbReference type="SMART" id="SM00498">
    <property type="entry name" value="FH2"/>
    <property type="match status" value="1"/>
</dbReference>
<dbReference type="SUPFAM" id="SSF101447">
    <property type="entry name" value="Formin homology 2 domain (FH2 domain)"/>
    <property type="match status" value="1"/>
</dbReference>
<dbReference type="PROSITE" id="PS51444">
    <property type="entry name" value="FH2"/>
    <property type="match status" value="1"/>
</dbReference>
<accession>A2XUA1</accession>
<comment type="subcellular location">
    <subcellularLocation>
        <location evidence="4">Membrane</location>
        <topology evidence="4">Single-pass membrane protein</topology>
    </subcellularLocation>
</comment>
<comment type="similarity">
    <text evidence="4">Belongs to the formin-like family. Class-I subfamily.</text>
</comment>